<comment type="function">
    <text evidence="3">Component of the CCR4-NOT complex which is one of the major cellular mRNA deadenylases and is linked to various cellular processes including bulk mRNA degradation, miRNA-mediated repression, translational repression during translational initiation and general transcription regulation. Additional complex functions may be a consequence of its influence on mRNA expression. Involved in down-regulation of MYB- and JUN-dependent transcription. Enhances ligand-dependent transcriptional activity of nuclear hormone receptors. May play a role in cell differentiation.</text>
</comment>
<comment type="subunit">
    <text evidence="1">Homodimer. Component of the CCR4-NOT complex (By similarity).</text>
</comment>
<comment type="subcellular location">
    <subcellularLocation>
        <location evidence="3">Nucleus</location>
    </subcellularLocation>
    <subcellularLocation>
        <location evidence="3">Cytoplasm</location>
        <location evidence="3">P-body</location>
    </subcellularLocation>
</comment>
<comment type="similarity">
    <text evidence="4">Belongs to the CNOT9 family.</text>
</comment>
<protein>
    <recommendedName>
        <fullName evidence="2">CCR4-NOT transcription complex subunit 9</fullName>
    </recommendedName>
    <alternativeName>
        <fullName>Cell differentiation protein RQCD1 homolog</fullName>
        <shortName>Rcd-1</shortName>
    </alternativeName>
</protein>
<proteinExistence type="evidence at transcript level"/>
<sequence>MLATGATVSTAGLAQVDREKIYQWINELSSPETRENALLELSKKRESVTDLAPMLWHSCGTIAALLQEIVNIYPSINPPTLTAHQSNRVCNALALLQCVASHVETRSAFLAAHIPLFLYPFLHTVSKTRPFEYLRLTSLGVIGALVKTDEQEVINFLLTTEIIPLCLRIMESGSELSKTVATFILQKILLDDTGLAYICQTYERFSHVAMILGKMVLQLSKEPSARLLKHVVRCYLRLSDNSRAREALRQCLPDQLKDTTFAQVLKDDSTTKRWLAQLVKNLQEGQVTDPRGIPLPTQ</sequence>
<keyword id="KW-0010">Activator</keyword>
<keyword id="KW-0963">Cytoplasm</keyword>
<keyword id="KW-0539">Nucleus</keyword>
<keyword id="KW-1185">Reference proteome</keyword>
<keyword id="KW-0678">Repressor</keyword>
<keyword id="KW-0943">RNA-mediated gene silencing</keyword>
<keyword id="KW-0804">Transcription</keyword>
<keyword id="KW-0805">Transcription regulation</keyword>
<keyword id="KW-0810">Translation regulation</keyword>
<name>CNOT9_DANRE</name>
<feature type="chain" id="PRO_0000327230" description="CCR4-NOT transcription complex subunit 9">
    <location>
        <begin position="1"/>
        <end position="298"/>
    </location>
</feature>
<organism>
    <name type="scientific">Danio rerio</name>
    <name type="common">Zebrafish</name>
    <name type="synonym">Brachydanio rerio</name>
    <dbReference type="NCBI Taxonomy" id="7955"/>
    <lineage>
        <taxon>Eukaryota</taxon>
        <taxon>Metazoa</taxon>
        <taxon>Chordata</taxon>
        <taxon>Craniata</taxon>
        <taxon>Vertebrata</taxon>
        <taxon>Euteleostomi</taxon>
        <taxon>Actinopterygii</taxon>
        <taxon>Neopterygii</taxon>
        <taxon>Teleostei</taxon>
        <taxon>Ostariophysi</taxon>
        <taxon>Cypriniformes</taxon>
        <taxon>Danionidae</taxon>
        <taxon>Danioninae</taxon>
        <taxon>Danio</taxon>
    </lineage>
</organism>
<accession>Q6NWL4</accession>
<evidence type="ECO:0000250" key="1"/>
<evidence type="ECO:0000250" key="2">
    <source>
        <dbReference type="UniProtKB" id="Q92600"/>
    </source>
</evidence>
<evidence type="ECO:0000250" key="3">
    <source>
        <dbReference type="UniProtKB" id="Q9JKY0"/>
    </source>
</evidence>
<evidence type="ECO:0000305" key="4"/>
<gene>
    <name evidence="2" type="primary">cnot9</name>
    <name type="synonym">rcd1</name>
    <name type="synonym">rqcd1</name>
    <name type="ORF">si:dkeyp-84a8.6</name>
    <name type="ORF">zgc:85618</name>
</gene>
<dbReference type="EMBL" id="BX548072">
    <property type="protein sequence ID" value="CAK11458.1"/>
    <property type="molecule type" value="Genomic_DNA"/>
</dbReference>
<dbReference type="EMBL" id="BC067547">
    <property type="protein sequence ID" value="AAH67547.1"/>
    <property type="molecule type" value="mRNA"/>
</dbReference>
<dbReference type="RefSeq" id="NP_999925.1">
    <property type="nucleotide sequence ID" value="NM_214760.2"/>
</dbReference>
<dbReference type="SMR" id="Q6NWL4"/>
<dbReference type="FunCoup" id="Q6NWL4">
    <property type="interactions" value="2900"/>
</dbReference>
<dbReference type="STRING" id="7955.ENSDARP00000113790"/>
<dbReference type="PaxDb" id="7955-ENSDARP00000047463"/>
<dbReference type="DNASU" id="406632"/>
<dbReference type="Ensembl" id="ENSDART00000143574">
    <property type="protein sequence ID" value="ENSDARP00000113790"/>
    <property type="gene ID" value="ENSDARG00000033855"/>
</dbReference>
<dbReference type="GeneID" id="406632"/>
<dbReference type="KEGG" id="dre:406632"/>
<dbReference type="AGR" id="ZFIN:ZDB-GENE-030131-1558"/>
<dbReference type="CTD" id="9125"/>
<dbReference type="ZFIN" id="ZDB-GENE-030131-1558">
    <property type="gene designation" value="cnot9"/>
</dbReference>
<dbReference type="eggNOG" id="KOG3036">
    <property type="taxonomic scope" value="Eukaryota"/>
</dbReference>
<dbReference type="HOGENOM" id="CLU_039962_2_0_1"/>
<dbReference type="InParanoid" id="Q6NWL4"/>
<dbReference type="OMA" id="EKVYTWI"/>
<dbReference type="OrthoDB" id="1183224at2759"/>
<dbReference type="PhylomeDB" id="Q6NWL4"/>
<dbReference type="TreeFam" id="TF105734"/>
<dbReference type="Reactome" id="R-DRE-6804115">
    <property type="pathway name" value="TP53 regulates transcription of additional cell cycle genes whose exact role in the p53 pathway remain uncertain"/>
</dbReference>
<dbReference type="PRO" id="PR:Q6NWL4"/>
<dbReference type="Proteomes" id="UP000000437">
    <property type="component" value="Chromosome 22"/>
</dbReference>
<dbReference type="Bgee" id="ENSDARG00000033855">
    <property type="expression patterns" value="Expressed in testis and 28 other cell types or tissues"/>
</dbReference>
<dbReference type="GO" id="GO:0030014">
    <property type="term" value="C:CCR4-NOT complex"/>
    <property type="evidence" value="ECO:0000250"/>
    <property type="project" value="UniProtKB"/>
</dbReference>
<dbReference type="GO" id="GO:0030015">
    <property type="term" value="C:CCR4-NOT core complex"/>
    <property type="evidence" value="ECO:0000318"/>
    <property type="project" value="GO_Central"/>
</dbReference>
<dbReference type="GO" id="GO:0005634">
    <property type="term" value="C:nucleus"/>
    <property type="evidence" value="ECO:0007669"/>
    <property type="project" value="UniProtKB-SubCell"/>
</dbReference>
<dbReference type="GO" id="GO:0000932">
    <property type="term" value="C:P-body"/>
    <property type="evidence" value="ECO:0000318"/>
    <property type="project" value="GO_Central"/>
</dbReference>
<dbReference type="GO" id="GO:0003713">
    <property type="term" value="F:transcription coactivator activity"/>
    <property type="evidence" value="ECO:0000250"/>
    <property type="project" value="UniProtKB"/>
</dbReference>
<dbReference type="GO" id="GO:0006402">
    <property type="term" value="P:mRNA catabolic process"/>
    <property type="evidence" value="ECO:0007669"/>
    <property type="project" value="InterPro"/>
</dbReference>
<dbReference type="GO" id="GO:0033147">
    <property type="term" value="P:negative regulation of intracellular estrogen receptor signaling pathway"/>
    <property type="evidence" value="ECO:0000250"/>
    <property type="project" value="UniProtKB"/>
</dbReference>
<dbReference type="GO" id="GO:0017148">
    <property type="term" value="P:negative regulation of translation"/>
    <property type="evidence" value="ECO:0000318"/>
    <property type="project" value="GO_Central"/>
</dbReference>
<dbReference type="GO" id="GO:0031047">
    <property type="term" value="P:regulatory ncRNA-mediated gene silencing"/>
    <property type="evidence" value="ECO:0007669"/>
    <property type="project" value="UniProtKB-KW"/>
</dbReference>
<dbReference type="FunFam" id="1.25.10.10:FF:000037">
    <property type="entry name" value="CCR4-NOT transcription complex subunit 9"/>
    <property type="match status" value="1"/>
</dbReference>
<dbReference type="Gene3D" id="1.25.10.10">
    <property type="entry name" value="Leucine-rich Repeat Variant"/>
    <property type="match status" value="1"/>
</dbReference>
<dbReference type="InterPro" id="IPR011989">
    <property type="entry name" value="ARM-like"/>
</dbReference>
<dbReference type="InterPro" id="IPR016024">
    <property type="entry name" value="ARM-type_fold"/>
</dbReference>
<dbReference type="InterPro" id="IPR007216">
    <property type="entry name" value="CNOT9"/>
</dbReference>
<dbReference type="PANTHER" id="PTHR12262">
    <property type="entry name" value="CCR4-NOT TRANSCRIPTION COMPLEX SUBUNIT 9"/>
    <property type="match status" value="1"/>
</dbReference>
<dbReference type="Pfam" id="PF04078">
    <property type="entry name" value="Rcd1"/>
    <property type="match status" value="1"/>
</dbReference>
<dbReference type="SUPFAM" id="SSF48371">
    <property type="entry name" value="ARM repeat"/>
    <property type="match status" value="1"/>
</dbReference>
<reference key="1">
    <citation type="journal article" date="2013" name="Nature">
        <title>The zebrafish reference genome sequence and its relationship to the human genome.</title>
        <authorList>
            <person name="Howe K."/>
            <person name="Clark M.D."/>
            <person name="Torroja C.F."/>
            <person name="Torrance J."/>
            <person name="Berthelot C."/>
            <person name="Muffato M."/>
            <person name="Collins J.E."/>
            <person name="Humphray S."/>
            <person name="McLaren K."/>
            <person name="Matthews L."/>
            <person name="McLaren S."/>
            <person name="Sealy I."/>
            <person name="Caccamo M."/>
            <person name="Churcher C."/>
            <person name="Scott C."/>
            <person name="Barrett J.C."/>
            <person name="Koch R."/>
            <person name="Rauch G.J."/>
            <person name="White S."/>
            <person name="Chow W."/>
            <person name="Kilian B."/>
            <person name="Quintais L.T."/>
            <person name="Guerra-Assuncao J.A."/>
            <person name="Zhou Y."/>
            <person name="Gu Y."/>
            <person name="Yen J."/>
            <person name="Vogel J.H."/>
            <person name="Eyre T."/>
            <person name="Redmond S."/>
            <person name="Banerjee R."/>
            <person name="Chi J."/>
            <person name="Fu B."/>
            <person name="Langley E."/>
            <person name="Maguire S.F."/>
            <person name="Laird G.K."/>
            <person name="Lloyd D."/>
            <person name="Kenyon E."/>
            <person name="Donaldson S."/>
            <person name="Sehra H."/>
            <person name="Almeida-King J."/>
            <person name="Loveland J."/>
            <person name="Trevanion S."/>
            <person name="Jones M."/>
            <person name="Quail M."/>
            <person name="Willey D."/>
            <person name="Hunt A."/>
            <person name="Burton J."/>
            <person name="Sims S."/>
            <person name="McLay K."/>
            <person name="Plumb B."/>
            <person name="Davis J."/>
            <person name="Clee C."/>
            <person name="Oliver K."/>
            <person name="Clark R."/>
            <person name="Riddle C."/>
            <person name="Elliot D."/>
            <person name="Threadgold G."/>
            <person name="Harden G."/>
            <person name="Ware D."/>
            <person name="Begum S."/>
            <person name="Mortimore B."/>
            <person name="Kerry G."/>
            <person name="Heath P."/>
            <person name="Phillimore B."/>
            <person name="Tracey A."/>
            <person name="Corby N."/>
            <person name="Dunn M."/>
            <person name="Johnson C."/>
            <person name="Wood J."/>
            <person name="Clark S."/>
            <person name="Pelan S."/>
            <person name="Griffiths G."/>
            <person name="Smith M."/>
            <person name="Glithero R."/>
            <person name="Howden P."/>
            <person name="Barker N."/>
            <person name="Lloyd C."/>
            <person name="Stevens C."/>
            <person name="Harley J."/>
            <person name="Holt K."/>
            <person name="Panagiotidis G."/>
            <person name="Lovell J."/>
            <person name="Beasley H."/>
            <person name="Henderson C."/>
            <person name="Gordon D."/>
            <person name="Auger K."/>
            <person name="Wright D."/>
            <person name="Collins J."/>
            <person name="Raisen C."/>
            <person name="Dyer L."/>
            <person name="Leung K."/>
            <person name="Robertson L."/>
            <person name="Ambridge K."/>
            <person name="Leongamornlert D."/>
            <person name="McGuire S."/>
            <person name="Gilderthorp R."/>
            <person name="Griffiths C."/>
            <person name="Manthravadi D."/>
            <person name="Nichol S."/>
            <person name="Barker G."/>
            <person name="Whitehead S."/>
            <person name="Kay M."/>
            <person name="Brown J."/>
            <person name="Murnane C."/>
            <person name="Gray E."/>
            <person name="Humphries M."/>
            <person name="Sycamore N."/>
            <person name="Barker D."/>
            <person name="Saunders D."/>
            <person name="Wallis J."/>
            <person name="Babbage A."/>
            <person name="Hammond S."/>
            <person name="Mashreghi-Mohammadi M."/>
            <person name="Barr L."/>
            <person name="Martin S."/>
            <person name="Wray P."/>
            <person name="Ellington A."/>
            <person name="Matthews N."/>
            <person name="Ellwood M."/>
            <person name="Woodmansey R."/>
            <person name="Clark G."/>
            <person name="Cooper J."/>
            <person name="Tromans A."/>
            <person name="Grafham D."/>
            <person name="Skuce C."/>
            <person name="Pandian R."/>
            <person name="Andrews R."/>
            <person name="Harrison E."/>
            <person name="Kimberley A."/>
            <person name="Garnett J."/>
            <person name="Fosker N."/>
            <person name="Hall R."/>
            <person name="Garner P."/>
            <person name="Kelly D."/>
            <person name="Bird C."/>
            <person name="Palmer S."/>
            <person name="Gehring I."/>
            <person name="Berger A."/>
            <person name="Dooley C.M."/>
            <person name="Ersan-Urun Z."/>
            <person name="Eser C."/>
            <person name="Geiger H."/>
            <person name="Geisler M."/>
            <person name="Karotki L."/>
            <person name="Kirn A."/>
            <person name="Konantz J."/>
            <person name="Konantz M."/>
            <person name="Oberlander M."/>
            <person name="Rudolph-Geiger S."/>
            <person name="Teucke M."/>
            <person name="Lanz C."/>
            <person name="Raddatz G."/>
            <person name="Osoegawa K."/>
            <person name="Zhu B."/>
            <person name="Rapp A."/>
            <person name="Widaa S."/>
            <person name="Langford C."/>
            <person name="Yang F."/>
            <person name="Schuster S.C."/>
            <person name="Carter N.P."/>
            <person name="Harrow J."/>
            <person name="Ning Z."/>
            <person name="Herrero J."/>
            <person name="Searle S.M."/>
            <person name="Enright A."/>
            <person name="Geisler R."/>
            <person name="Plasterk R.H."/>
            <person name="Lee C."/>
            <person name="Westerfield M."/>
            <person name="de Jong P.J."/>
            <person name="Zon L.I."/>
            <person name="Postlethwait J.H."/>
            <person name="Nusslein-Volhard C."/>
            <person name="Hubbard T.J."/>
            <person name="Roest Crollius H."/>
            <person name="Rogers J."/>
            <person name="Stemple D.L."/>
        </authorList>
    </citation>
    <scope>NUCLEOTIDE SEQUENCE [LARGE SCALE GENOMIC DNA]</scope>
    <source>
        <strain>Tuebingen</strain>
    </source>
</reference>
<reference key="2">
    <citation type="submission" date="2004-03" db="EMBL/GenBank/DDBJ databases">
        <authorList>
            <consortium name="NIH - Zebrafish Gene Collection (ZGC) project"/>
        </authorList>
    </citation>
    <scope>NUCLEOTIDE SEQUENCE [LARGE SCALE MRNA]</scope>
    <source>
        <tissue>Kidney</tissue>
    </source>
</reference>